<gene>
    <name type="primary">PHACTR4</name>
</gene>
<name>PHAR4_BOVIN</name>
<reference key="1">
    <citation type="journal article" date="2009" name="Genome Biol.">
        <title>A whole-genome assembly of the domestic cow, Bos taurus.</title>
        <authorList>
            <person name="Zimin A.V."/>
            <person name="Delcher A.L."/>
            <person name="Florea L."/>
            <person name="Kelley D.R."/>
            <person name="Schatz M.C."/>
            <person name="Puiu D."/>
            <person name="Hanrahan F."/>
            <person name="Pertea G."/>
            <person name="Van Tassell C.P."/>
            <person name="Sonstegard T.S."/>
            <person name="Marcais G."/>
            <person name="Roberts M."/>
            <person name="Subramanian P."/>
            <person name="Yorke J.A."/>
            <person name="Salzberg S.L."/>
        </authorList>
    </citation>
    <scope>NUCLEOTIDE SEQUENCE [LARGE SCALE GENOMIC DNA]</scope>
    <source>
        <strain>Hereford</strain>
    </source>
</reference>
<reference key="2">
    <citation type="submission" date="2007-07" db="EMBL/GenBank/DDBJ databases">
        <authorList>
            <consortium name="NIH - Mammalian Gene Collection (MGC) project"/>
        </authorList>
    </citation>
    <scope>NUCLEOTIDE SEQUENCE [LARGE SCALE MRNA]</scope>
    <source>
        <strain>Hereford</strain>
        <tissue>Fetal skin</tissue>
    </source>
</reference>
<protein>
    <recommendedName>
        <fullName>Phosphatase and actin regulator 4</fullName>
    </recommendedName>
</protein>
<accession>F1MCY2</accession>
<accession>A6QP20</accession>
<proteinExistence type="evidence at transcript level"/>
<keyword id="KW-0009">Actin-binding</keyword>
<keyword id="KW-0966">Cell projection</keyword>
<keyword id="KW-0963">Cytoplasm</keyword>
<keyword id="KW-0217">Developmental protein</keyword>
<keyword id="KW-0524">Neurogenesis</keyword>
<keyword id="KW-0597">Phosphoprotein</keyword>
<keyword id="KW-1185">Reference proteome</keyword>
<keyword id="KW-0677">Repeat</keyword>
<sequence>MGQADISRPVNPDGVEEIGQPTADLGMVMDCVEAGDITPPTKRKSKFSGFGKIFKPWKWRKKKSDKFKETSEVLERKISMRKPREELVKRGLLLEDSEQGGEDPGKLSHATLKNGHTTLIGSTRSSSPVQVEEESERIASLRKPVPEEEPKKRLGSSGSQPHSEAEFVPESIPKQPLLPPKRHLSSSHEANEGQAKDATSSGSLARPSSSASTTAITTAPAATMAATNPAKTVHSSGPPSQAPRTLPAAPASTHTTATLSLTHTGPAKQPPIPPPKPTHRNSNPVIAELSQAINSGTLLSKPSPPLPPKRGIPSALVPTSESAAATTATKAPSDQREKSACSVGSEPLLTPSSSPLPAHIPPEPPQSPPFPAKTFQVVPEIEFPPSLDLPQEIPQQESQKREVPKRMLDHSFGEPQVPPRLPPVPLHIRIQQALTSPLPVTPPLEGSHRAHSLLFENSDNFSEDSSTLGRTRSLPITIEMLKVPDDEEEEEQSHIFAFDEDVASTSVIPKLPQCLQEEEEGKESDSDSEGPIQYRDEEDEDESHHSALANKVKRKDTLAMKLNHKPSEPEMNMNSWPRKSKEEWNEIRHQIGNTLIRRLSQRPTPEELEQRNILQPKNEADRQAEKREIKRRLTRKLSQRPTVAELLARKILRFNEYVEVTDAHDYDRRADKPWTKLTPADKAAIRKELNEFKSSEMEVHEDSKHFTRYHRP</sequence>
<organism>
    <name type="scientific">Bos taurus</name>
    <name type="common">Bovine</name>
    <dbReference type="NCBI Taxonomy" id="9913"/>
    <lineage>
        <taxon>Eukaryota</taxon>
        <taxon>Metazoa</taxon>
        <taxon>Chordata</taxon>
        <taxon>Craniata</taxon>
        <taxon>Vertebrata</taxon>
        <taxon>Euteleostomi</taxon>
        <taxon>Mammalia</taxon>
        <taxon>Eutheria</taxon>
        <taxon>Laurasiatheria</taxon>
        <taxon>Artiodactyla</taxon>
        <taxon>Ruminantia</taxon>
        <taxon>Pecora</taxon>
        <taxon>Bovidae</taxon>
        <taxon>Bovinae</taxon>
        <taxon>Bos</taxon>
    </lineage>
</organism>
<dbReference type="EMBL" id="DAAA02006337">
    <property type="status" value="NOT_ANNOTATED_CDS"/>
    <property type="molecule type" value="Genomic_DNA"/>
</dbReference>
<dbReference type="EMBL" id="BC149103">
    <property type="protein sequence ID" value="AAI49104.1"/>
    <property type="molecule type" value="mRNA"/>
</dbReference>
<dbReference type="RefSeq" id="NP_001095477.1">
    <property type="nucleotide sequence ID" value="NM_001102007.1"/>
</dbReference>
<dbReference type="RefSeq" id="XP_059749327.1">
    <property type="nucleotide sequence ID" value="XM_059893344.1"/>
</dbReference>
<dbReference type="SMR" id="F1MCY2"/>
<dbReference type="FunCoup" id="F1MCY2">
    <property type="interactions" value="2386"/>
</dbReference>
<dbReference type="STRING" id="9913.ENSBTAP00000003535"/>
<dbReference type="PaxDb" id="9913-ENSBTAP00000003535"/>
<dbReference type="GeneID" id="514644"/>
<dbReference type="KEGG" id="bta:514644"/>
<dbReference type="CTD" id="65979"/>
<dbReference type="VEuPathDB" id="HostDB:ENSBTAG00000002727"/>
<dbReference type="eggNOG" id="KOG4339">
    <property type="taxonomic scope" value="Eukaryota"/>
</dbReference>
<dbReference type="HOGENOM" id="CLU_015753_1_1_1"/>
<dbReference type="InParanoid" id="F1MCY2"/>
<dbReference type="OMA" id="TMNRSPR"/>
<dbReference type="OrthoDB" id="5563016at2759"/>
<dbReference type="TreeFam" id="TF316316"/>
<dbReference type="Proteomes" id="UP000009136">
    <property type="component" value="Chromosome 2"/>
</dbReference>
<dbReference type="Bgee" id="ENSBTAG00000002727">
    <property type="expression patterns" value="Expressed in metanephros cortex and 105 other cell types or tissues"/>
</dbReference>
<dbReference type="GO" id="GO:0005737">
    <property type="term" value="C:cytoplasm"/>
    <property type="evidence" value="ECO:0007669"/>
    <property type="project" value="UniProtKB-SubCell"/>
</dbReference>
<dbReference type="GO" id="GO:0030027">
    <property type="term" value="C:lamellipodium"/>
    <property type="evidence" value="ECO:0000250"/>
    <property type="project" value="UniProtKB"/>
</dbReference>
<dbReference type="GO" id="GO:0003779">
    <property type="term" value="F:actin binding"/>
    <property type="evidence" value="ECO:0000250"/>
    <property type="project" value="UniProtKB"/>
</dbReference>
<dbReference type="GO" id="GO:0008157">
    <property type="term" value="F:protein phosphatase 1 binding"/>
    <property type="evidence" value="ECO:0000250"/>
    <property type="project" value="UniProtKB"/>
</dbReference>
<dbReference type="GO" id="GO:0072542">
    <property type="term" value="F:protein phosphatase activator activity"/>
    <property type="evidence" value="ECO:0000250"/>
    <property type="project" value="UniProtKB"/>
</dbReference>
<dbReference type="GO" id="GO:0030036">
    <property type="term" value="P:actin cytoskeleton organization"/>
    <property type="evidence" value="ECO:0000250"/>
    <property type="project" value="UniProtKB"/>
</dbReference>
<dbReference type="GO" id="GO:0061386">
    <property type="term" value="P:closure of optic fissure"/>
    <property type="evidence" value="ECO:0000250"/>
    <property type="project" value="UniProtKB"/>
</dbReference>
<dbReference type="GO" id="GO:0048484">
    <property type="term" value="P:enteric nervous system development"/>
    <property type="evidence" value="ECO:0000250"/>
    <property type="project" value="UniProtKB"/>
</dbReference>
<dbReference type="GO" id="GO:2001045">
    <property type="term" value="P:negative regulation of integrin-mediated signaling pathway"/>
    <property type="evidence" value="ECO:0000250"/>
    <property type="project" value="UniProtKB"/>
</dbReference>
<dbReference type="GO" id="GO:0001755">
    <property type="term" value="P:neural crest cell migration"/>
    <property type="evidence" value="ECO:0000250"/>
    <property type="project" value="UniProtKB"/>
</dbReference>
<dbReference type="GO" id="GO:0001843">
    <property type="term" value="P:neural tube closure"/>
    <property type="evidence" value="ECO:0000250"/>
    <property type="project" value="UniProtKB"/>
</dbReference>
<dbReference type="GO" id="GO:0043085">
    <property type="term" value="P:positive regulation of catalytic activity"/>
    <property type="evidence" value="ECO:0000250"/>
    <property type="project" value="UniProtKB"/>
</dbReference>
<dbReference type="GO" id="GO:0051726">
    <property type="term" value="P:regulation of cell cycle"/>
    <property type="evidence" value="ECO:0000250"/>
    <property type="project" value="UniProtKB"/>
</dbReference>
<dbReference type="GO" id="GO:0007266">
    <property type="term" value="P:Rho protein signal transduction"/>
    <property type="evidence" value="ECO:0000250"/>
    <property type="project" value="UniProtKB"/>
</dbReference>
<dbReference type="Gene3D" id="6.10.140.1750">
    <property type="match status" value="1"/>
</dbReference>
<dbReference type="Gene3D" id="6.10.140.2130">
    <property type="match status" value="1"/>
</dbReference>
<dbReference type="InterPro" id="IPR004018">
    <property type="entry name" value="RPEL_repeat"/>
</dbReference>
<dbReference type="PANTHER" id="PTHR12751:SF4">
    <property type="entry name" value="PHOSPHATASE AND ACTIN REGULATOR 4"/>
    <property type="match status" value="1"/>
</dbReference>
<dbReference type="PANTHER" id="PTHR12751">
    <property type="entry name" value="PHOSPHATASE AND ACTIN REGULATOR PHACTR"/>
    <property type="match status" value="1"/>
</dbReference>
<dbReference type="Pfam" id="PF02755">
    <property type="entry name" value="RPEL"/>
    <property type="match status" value="3"/>
</dbReference>
<dbReference type="SMART" id="SM00707">
    <property type="entry name" value="RPEL"/>
    <property type="match status" value="3"/>
</dbReference>
<dbReference type="PROSITE" id="PS51073">
    <property type="entry name" value="RPEL"/>
    <property type="match status" value="3"/>
</dbReference>
<evidence type="ECO:0000250" key="1"/>
<evidence type="ECO:0000250" key="2">
    <source>
        <dbReference type="UniProtKB" id="Q501J7"/>
    </source>
</evidence>
<evidence type="ECO:0000250" key="3">
    <source>
        <dbReference type="UniProtKB" id="Q8IZ21"/>
    </source>
</evidence>
<evidence type="ECO:0000256" key="4">
    <source>
        <dbReference type="SAM" id="MobiDB-lite"/>
    </source>
</evidence>
<evidence type="ECO:0000305" key="5"/>
<feature type="chain" id="PRO_0000416888" description="Phosphatase and actin regulator 4">
    <location>
        <begin position="1"/>
        <end position="712"/>
    </location>
</feature>
<feature type="repeat" description="RPEL 1">
    <location>
        <begin position="72"/>
        <end position="97"/>
    </location>
</feature>
<feature type="repeat" description="RPEL 2">
    <location>
        <begin position="593"/>
        <end position="618"/>
    </location>
</feature>
<feature type="repeat" description="RPEL 3">
    <location>
        <begin position="631"/>
        <end position="656"/>
    </location>
</feature>
<feature type="region of interest" description="Disordered" evidence="4">
    <location>
        <begin position="1"/>
        <end position="22"/>
    </location>
</feature>
<feature type="region of interest" description="Disordered" evidence="4">
    <location>
        <begin position="90"/>
        <end position="405"/>
    </location>
</feature>
<feature type="region of interest" description="Disordered" evidence="4">
    <location>
        <begin position="507"/>
        <end position="557"/>
    </location>
</feature>
<feature type="region of interest" description="Disordered" evidence="4">
    <location>
        <begin position="602"/>
        <end position="626"/>
    </location>
</feature>
<feature type="compositionally biased region" description="Polar residues" evidence="4">
    <location>
        <begin position="114"/>
        <end position="124"/>
    </location>
</feature>
<feature type="compositionally biased region" description="Basic and acidic residues" evidence="4">
    <location>
        <begin position="136"/>
        <end position="152"/>
    </location>
</feature>
<feature type="compositionally biased region" description="Low complexity" evidence="4">
    <location>
        <begin position="198"/>
        <end position="230"/>
    </location>
</feature>
<feature type="compositionally biased region" description="Polar residues" evidence="4">
    <location>
        <begin position="233"/>
        <end position="243"/>
    </location>
</feature>
<feature type="compositionally biased region" description="Low complexity" evidence="4">
    <location>
        <begin position="245"/>
        <end position="267"/>
    </location>
</feature>
<feature type="compositionally biased region" description="Low complexity" evidence="4">
    <location>
        <begin position="345"/>
        <end position="357"/>
    </location>
</feature>
<feature type="compositionally biased region" description="Pro residues" evidence="4">
    <location>
        <begin position="358"/>
        <end position="371"/>
    </location>
</feature>
<feature type="compositionally biased region" description="Acidic residues" evidence="4">
    <location>
        <begin position="516"/>
        <end position="528"/>
    </location>
</feature>
<feature type="modified residue" description="Phosphoserine" evidence="2">
    <location>
        <position position="125"/>
    </location>
</feature>
<feature type="modified residue" description="Phosphoserine" evidence="3">
    <location>
        <position position="127"/>
    </location>
</feature>
<feature type="modified residue" description="Phosphoserine" evidence="3">
    <location>
        <position position="140"/>
    </location>
</feature>
<feature type="modified residue" description="Phosphoserine" evidence="3">
    <location>
        <position position="156"/>
    </location>
</feature>
<feature type="modified residue" description="Phosphoserine" evidence="2">
    <location>
        <position position="282"/>
    </location>
</feature>
<feature type="modified residue" description="Phosphoserine" evidence="3">
    <location>
        <position position="303"/>
    </location>
</feature>
<feature type="modified residue" description="Phosphoserine" evidence="3">
    <location>
        <position position="353"/>
    </location>
</feature>
<feature type="modified residue" description="Phosphoserine" evidence="3">
    <location>
        <position position="436"/>
    </location>
</feature>
<feature type="modified residue" description="Phosphothreonine" evidence="3">
    <location>
        <position position="441"/>
    </location>
</feature>
<feature type="modified residue" description="Phosphoserine" evidence="3">
    <location>
        <position position="452"/>
    </location>
</feature>
<feature type="modified residue" description="Phosphoserine" evidence="2">
    <location>
        <position position="462"/>
    </location>
</feature>
<feature type="modified residue" description="Phosphoserine" evidence="3">
    <location>
        <position position="473"/>
    </location>
</feature>
<feature type="modified residue" description="Phosphoserine" evidence="2">
    <location>
        <position position="524"/>
    </location>
</feature>
<feature type="modified residue" description="Phosphoserine" evidence="2">
    <location>
        <position position="526"/>
    </location>
</feature>
<feature type="modified residue" description="Phosphoserine" evidence="3">
    <location>
        <position position="567"/>
    </location>
</feature>
<feature type="modified residue" description="Phosphoserine" evidence="3">
    <location>
        <position position="600"/>
    </location>
</feature>
<feature type="modified residue" description="Phosphoserine" evidence="3">
    <location>
        <position position="638"/>
    </location>
</feature>
<feature type="sequence conflict" description="In Ref. 2; AAI49104." evidence="5" ref="2">
    <original>P</original>
    <variation>S</variation>
    <location>
        <position position="39"/>
    </location>
</feature>
<feature type="sequence conflict" description="In Ref. 2; AAI49104." evidence="5" ref="2">
    <original>P</original>
    <variation>L</variation>
    <location>
        <position position="284"/>
    </location>
</feature>
<comment type="function">
    <text evidence="1">Regulator of protein phosphatase 1 (PP1) required for neural tube and optic fissure closure, and enteric neural crest cell (ENCCs) migration during development. Acts as an activator of PP1 by interacting with PPP1CA and preventing phosphorylation of PPP1CA at 'Thr-320'. During neural tube closure, localizes to the ventral neural tube and activates PP1, leading to down-regulate cell proliferation within cranial neural tissue and the neural retina. Also acts as a regulator of migration of enteric neural crest cells (ENCCs) by activating PP1, leading to dephosphorylation and subsequent activation of cofilin (COF1 or COF2) and repression of the integrin signaling through the RHO/ROCK pathway (By similarity).</text>
</comment>
<comment type="subunit">
    <text evidence="1">Binds PPP1CA and actin.</text>
</comment>
<comment type="subcellular location">
    <subcellularLocation>
        <location evidence="1">Cytoplasm</location>
    </subcellularLocation>
    <subcellularLocation>
        <location evidence="1">Cell projection</location>
        <location evidence="1">Lamellipodium</location>
    </subcellularLocation>
</comment>
<comment type="similarity">
    <text evidence="5">Belongs to the phosphatase and actin regulator family.</text>
</comment>